<keyword id="KW-0004">4Fe-4S</keyword>
<keyword id="KW-0150">Chloroplast</keyword>
<keyword id="KW-0408">Iron</keyword>
<keyword id="KW-0411">Iron-sulfur</keyword>
<keyword id="KW-0472">Membrane</keyword>
<keyword id="KW-0479">Metal-binding</keyword>
<keyword id="KW-0520">NAD</keyword>
<keyword id="KW-0521">NADP</keyword>
<keyword id="KW-0934">Plastid</keyword>
<keyword id="KW-0618">Plastoquinone</keyword>
<keyword id="KW-0874">Quinone</keyword>
<keyword id="KW-0677">Repeat</keyword>
<keyword id="KW-0793">Thylakoid</keyword>
<keyword id="KW-1278">Translocase</keyword>
<protein>
    <recommendedName>
        <fullName evidence="1">NAD(P)H-quinone oxidoreductase subunit I, chloroplastic</fullName>
        <ecNumber evidence="1">7.1.1.-</ecNumber>
    </recommendedName>
    <alternativeName>
        <fullName evidence="1">NAD(P)H dehydrogenase subunit I</fullName>
        <shortName evidence="1">NDH subunit I</shortName>
    </alternativeName>
    <alternativeName>
        <fullName evidence="1">NADH-plastoquinone oxidoreductase subunit I</fullName>
    </alternativeName>
</protein>
<evidence type="ECO:0000255" key="1">
    <source>
        <dbReference type="HAMAP-Rule" id="MF_01351"/>
    </source>
</evidence>
<organism>
    <name type="scientific">Daucus carota</name>
    <name type="common">Wild carrot</name>
    <dbReference type="NCBI Taxonomy" id="4039"/>
    <lineage>
        <taxon>Eukaryota</taxon>
        <taxon>Viridiplantae</taxon>
        <taxon>Streptophyta</taxon>
        <taxon>Embryophyta</taxon>
        <taxon>Tracheophyta</taxon>
        <taxon>Spermatophyta</taxon>
        <taxon>Magnoliopsida</taxon>
        <taxon>eudicotyledons</taxon>
        <taxon>Gunneridae</taxon>
        <taxon>Pentapetalae</taxon>
        <taxon>asterids</taxon>
        <taxon>campanulids</taxon>
        <taxon>Apiales</taxon>
        <taxon>Apiaceae</taxon>
        <taxon>Apioideae</taxon>
        <taxon>Scandiceae</taxon>
        <taxon>Daucinae</taxon>
        <taxon>Daucus</taxon>
        <taxon>Daucus sect. Daucus</taxon>
    </lineage>
</organism>
<gene>
    <name evidence="1" type="primary">ndhI</name>
</gene>
<name>NDHI_DAUCA</name>
<comment type="function">
    <text evidence="1">NDH shuttles electrons from NAD(P)H:plastoquinone, via FMN and iron-sulfur (Fe-S) centers, to quinones in the photosynthetic chain and possibly in a chloroplast respiratory chain. The immediate electron acceptor for the enzyme in this species is believed to be plastoquinone. Couples the redox reaction to proton translocation, and thus conserves the redox energy in a proton gradient.</text>
</comment>
<comment type="catalytic activity">
    <reaction evidence="1">
        <text>a plastoquinone + NADH + (n+1) H(+)(in) = a plastoquinol + NAD(+) + n H(+)(out)</text>
        <dbReference type="Rhea" id="RHEA:42608"/>
        <dbReference type="Rhea" id="RHEA-COMP:9561"/>
        <dbReference type="Rhea" id="RHEA-COMP:9562"/>
        <dbReference type="ChEBI" id="CHEBI:15378"/>
        <dbReference type="ChEBI" id="CHEBI:17757"/>
        <dbReference type="ChEBI" id="CHEBI:57540"/>
        <dbReference type="ChEBI" id="CHEBI:57945"/>
        <dbReference type="ChEBI" id="CHEBI:62192"/>
    </reaction>
</comment>
<comment type="catalytic activity">
    <reaction evidence="1">
        <text>a plastoquinone + NADPH + (n+1) H(+)(in) = a plastoquinol + NADP(+) + n H(+)(out)</text>
        <dbReference type="Rhea" id="RHEA:42612"/>
        <dbReference type="Rhea" id="RHEA-COMP:9561"/>
        <dbReference type="Rhea" id="RHEA-COMP:9562"/>
        <dbReference type="ChEBI" id="CHEBI:15378"/>
        <dbReference type="ChEBI" id="CHEBI:17757"/>
        <dbReference type="ChEBI" id="CHEBI:57783"/>
        <dbReference type="ChEBI" id="CHEBI:58349"/>
        <dbReference type="ChEBI" id="CHEBI:62192"/>
    </reaction>
</comment>
<comment type="cofactor">
    <cofactor evidence="1">
        <name>[4Fe-4S] cluster</name>
        <dbReference type="ChEBI" id="CHEBI:49883"/>
    </cofactor>
    <text evidence="1">Binds 2 [4Fe-4S] clusters per subunit.</text>
</comment>
<comment type="subunit">
    <text evidence="1">NDH is composed of at least 16 different subunits, 5 of which are encoded in the nucleus.</text>
</comment>
<comment type="subcellular location">
    <subcellularLocation>
        <location evidence="1">Plastid</location>
        <location evidence="1">Chloroplast thylakoid membrane</location>
        <topology evidence="1">Peripheral membrane protein</topology>
    </subcellularLocation>
</comment>
<comment type="similarity">
    <text evidence="1">Belongs to the complex I 23 kDa subunit family.</text>
</comment>
<sequence>MFSMVTEFMNYSQQTVRAARYIGQGFMITLSHASRLPVTIQYPYEKLITSERFRGRIHFEFDKCIACEVCVRVCPIDLPVVDWKLEKDIRKKRLLNYSIDFGICIFCGNCVEYCPTNCLSMTEEYELSTYDRHELNYNQIALGRLPMSIINDYTTRTILNLPMK</sequence>
<geneLocation type="chloroplast"/>
<proteinExistence type="inferred from homology"/>
<accession>Q0G9Q8</accession>
<dbReference type="EC" id="7.1.1.-" evidence="1"/>
<dbReference type="EMBL" id="DQ898156">
    <property type="protein sequence ID" value="ABI32478.1"/>
    <property type="molecule type" value="Genomic_DNA"/>
</dbReference>
<dbReference type="RefSeq" id="YP_740171.1">
    <property type="nucleotide sequence ID" value="NC_008325.1"/>
</dbReference>
<dbReference type="SMR" id="Q0G9Q8"/>
<dbReference type="GeneID" id="4266814"/>
<dbReference type="OMA" id="WRPVIDY"/>
<dbReference type="GO" id="GO:0009535">
    <property type="term" value="C:chloroplast thylakoid membrane"/>
    <property type="evidence" value="ECO:0007669"/>
    <property type="project" value="UniProtKB-SubCell"/>
</dbReference>
<dbReference type="GO" id="GO:0051539">
    <property type="term" value="F:4 iron, 4 sulfur cluster binding"/>
    <property type="evidence" value="ECO:0007669"/>
    <property type="project" value="UniProtKB-KW"/>
</dbReference>
<dbReference type="GO" id="GO:0005506">
    <property type="term" value="F:iron ion binding"/>
    <property type="evidence" value="ECO:0007669"/>
    <property type="project" value="UniProtKB-UniRule"/>
</dbReference>
<dbReference type="GO" id="GO:0008137">
    <property type="term" value="F:NADH dehydrogenase (ubiquinone) activity"/>
    <property type="evidence" value="ECO:0007669"/>
    <property type="project" value="InterPro"/>
</dbReference>
<dbReference type="GO" id="GO:0048038">
    <property type="term" value="F:quinone binding"/>
    <property type="evidence" value="ECO:0007669"/>
    <property type="project" value="UniProtKB-KW"/>
</dbReference>
<dbReference type="GO" id="GO:0019684">
    <property type="term" value="P:photosynthesis, light reaction"/>
    <property type="evidence" value="ECO:0007669"/>
    <property type="project" value="UniProtKB-UniRule"/>
</dbReference>
<dbReference type="FunFam" id="3.30.70.3270:FF:000006">
    <property type="entry name" value="NAD(P)H-quinone oxidoreductase subunit I, chloroplastic"/>
    <property type="match status" value="1"/>
</dbReference>
<dbReference type="Gene3D" id="3.30.70.3270">
    <property type="match status" value="1"/>
</dbReference>
<dbReference type="HAMAP" id="MF_01351">
    <property type="entry name" value="NDH1_NuoI"/>
    <property type="match status" value="1"/>
</dbReference>
<dbReference type="InterPro" id="IPR017896">
    <property type="entry name" value="4Fe4S_Fe-S-bd"/>
</dbReference>
<dbReference type="InterPro" id="IPR017900">
    <property type="entry name" value="4Fe4S_Fe_S_CS"/>
</dbReference>
<dbReference type="InterPro" id="IPR010226">
    <property type="entry name" value="NADH_quinone_OxRdtase_chainI"/>
</dbReference>
<dbReference type="InterPro" id="IPR004497">
    <property type="entry name" value="NDHI"/>
</dbReference>
<dbReference type="NCBIfam" id="TIGR00403">
    <property type="entry name" value="ndhI"/>
    <property type="match status" value="1"/>
</dbReference>
<dbReference type="NCBIfam" id="TIGR01971">
    <property type="entry name" value="NuoI"/>
    <property type="match status" value="1"/>
</dbReference>
<dbReference type="NCBIfam" id="NF004537">
    <property type="entry name" value="PRK05888.1-3"/>
    <property type="match status" value="1"/>
</dbReference>
<dbReference type="PANTHER" id="PTHR47275">
    <property type="entry name" value="NAD(P)H-QUINONE OXIDOREDUCTASE SUBUNIT I, CHLOROPLASTIC"/>
    <property type="match status" value="1"/>
</dbReference>
<dbReference type="PANTHER" id="PTHR47275:SF1">
    <property type="entry name" value="NAD(P)H-QUINONE OXIDOREDUCTASE SUBUNIT I, CHLOROPLASTIC"/>
    <property type="match status" value="1"/>
</dbReference>
<dbReference type="Pfam" id="PF12838">
    <property type="entry name" value="Fer4_7"/>
    <property type="match status" value="1"/>
</dbReference>
<dbReference type="SUPFAM" id="SSF54862">
    <property type="entry name" value="4Fe-4S ferredoxins"/>
    <property type="match status" value="1"/>
</dbReference>
<dbReference type="PROSITE" id="PS00198">
    <property type="entry name" value="4FE4S_FER_1"/>
    <property type="match status" value="2"/>
</dbReference>
<dbReference type="PROSITE" id="PS51379">
    <property type="entry name" value="4FE4S_FER_2"/>
    <property type="match status" value="2"/>
</dbReference>
<feature type="chain" id="PRO_0000275472" description="NAD(P)H-quinone oxidoreductase subunit I, chloroplastic">
    <location>
        <begin position="1"/>
        <end position="164"/>
    </location>
</feature>
<feature type="domain" description="4Fe-4S ferredoxin-type 1" evidence="1">
    <location>
        <begin position="55"/>
        <end position="84"/>
    </location>
</feature>
<feature type="domain" description="4Fe-4S ferredoxin-type 2" evidence="1">
    <location>
        <begin position="95"/>
        <end position="124"/>
    </location>
</feature>
<feature type="binding site" evidence="1">
    <location>
        <position position="64"/>
    </location>
    <ligand>
        <name>[4Fe-4S] cluster</name>
        <dbReference type="ChEBI" id="CHEBI:49883"/>
        <label>1</label>
    </ligand>
</feature>
<feature type="binding site" evidence="1">
    <location>
        <position position="67"/>
    </location>
    <ligand>
        <name>[4Fe-4S] cluster</name>
        <dbReference type="ChEBI" id="CHEBI:49883"/>
        <label>1</label>
    </ligand>
</feature>
<feature type="binding site" evidence="1">
    <location>
        <position position="70"/>
    </location>
    <ligand>
        <name>[4Fe-4S] cluster</name>
        <dbReference type="ChEBI" id="CHEBI:49883"/>
        <label>1</label>
    </ligand>
</feature>
<feature type="binding site" evidence="1">
    <location>
        <position position="74"/>
    </location>
    <ligand>
        <name>[4Fe-4S] cluster</name>
        <dbReference type="ChEBI" id="CHEBI:49883"/>
        <label>2</label>
    </ligand>
</feature>
<feature type="binding site" evidence="1">
    <location>
        <position position="104"/>
    </location>
    <ligand>
        <name>[4Fe-4S] cluster</name>
        <dbReference type="ChEBI" id="CHEBI:49883"/>
        <label>2</label>
    </ligand>
</feature>
<feature type="binding site" evidence="1">
    <location>
        <position position="107"/>
    </location>
    <ligand>
        <name>[4Fe-4S] cluster</name>
        <dbReference type="ChEBI" id="CHEBI:49883"/>
        <label>2</label>
    </ligand>
</feature>
<feature type="binding site" evidence="1">
    <location>
        <position position="110"/>
    </location>
    <ligand>
        <name>[4Fe-4S] cluster</name>
        <dbReference type="ChEBI" id="CHEBI:49883"/>
        <label>2</label>
    </ligand>
</feature>
<feature type="binding site" evidence="1">
    <location>
        <position position="114"/>
    </location>
    <ligand>
        <name>[4Fe-4S] cluster</name>
        <dbReference type="ChEBI" id="CHEBI:49883"/>
        <label>1</label>
    </ligand>
</feature>
<reference key="1">
    <citation type="journal article" date="2006" name="BMC Genomics">
        <title>Complete plastid genome sequence of Daucus carota: implications for biotechnology and phylogeny of angiosperms.</title>
        <authorList>
            <person name="Ruhlman T."/>
            <person name="Lee S.-B."/>
            <person name="Jansen R.K."/>
            <person name="Hostetler J.B."/>
            <person name="Tallon L.J."/>
            <person name="Town C.D."/>
            <person name="Daniell H."/>
        </authorList>
    </citation>
    <scope>NUCLEOTIDE SEQUENCE [LARGE SCALE GENOMIC DNA]</scope>
    <source>
        <strain>cv. Danvers Half-long</strain>
    </source>
</reference>